<keyword id="KW-0002">3D-structure</keyword>
<keyword id="KW-0150">Chloroplast</keyword>
<keyword id="KW-0472">Membrane</keyword>
<keyword id="KW-0602">Photosynthesis</keyword>
<keyword id="KW-0603">Photosystem I</keyword>
<keyword id="KW-0934">Plastid</keyword>
<keyword id="KW-1185">Reference proteome</keyword>
<keyword id="KW-0793">Thylakoid</keyword>
<keyword id="KW-0809">Transit peptide</keyword>
<keyword id="KW-0812">Transmembrane</keyword>
<keyword id="KW-1133">Transmembrane helix</keyword>
<name>PSAH_SPIOL</name>
<proteinExistence type="evidence at protein level"/>
<reference key="1">
    <citation type="journal article" date="1989" name="Curr. Genet.">
        <title>Nucleotide sequences of cDNA clones encoding the entire precursor polypeptide for subunit VI and of the plastome-encoded gene for subunit VII of the photosystem I reaction center from spinach.</title>
        <authorList>
            <person name="Steppuhn J."/>
            <person name="Hermans J."/>
            <person name="Nechushtai R."/>
            <person name="Herrmann G.S."/>
            <person name="Herrmann R.G."/>
        </authorList>
    </citation>
    <scope>NUCLEOTIDE SEQUENCE [MRNA]</scope>
</reference>
<evidence type="ECO:0000250" key="1"/>
<evidence type="ECO:0000255" key="2"/>
<evidence type="ECO:0000305" key="3"/>
<evidence type="ECO:0007829" key="4">
    <source>
        <dbReference type="PDB" id="2O01"/>
    </source>
</evidence>
<evidence type="ECO:0007829" key="5">
    <source>
        <dbReference type="PDB" id="2WSC"/>
    </source>
</evidence>
<organism>
    <name type="scientific">Spinacia oleracea</name>
    <name type="common">Spinach</name>
    <dbReference type="NCBI Taxonomy" id="3562"/>
    <lineage>
        <taxon>Eukaryota</taxon>
        <taxon>Viridiplantae</taxon>
        <taxon>Streptophyta</taxon>
        <taxon>Embryophyta</taxon>
        <taxon>Tracheophyta</taxon>
        <taxon>Spermatophyta</taxon>
        <taxon>Magnoliopsida</taxon>
        <taxon>eudicotyledons</taxon>
        <taxon>Gunneridae</taxon>
        <taxon>Pentapetalae</taxon>
        <taxon>Caryophyllales</taxon>
        <taxon>Chenopodiaceae</taxon>
        <taxon>Chenopodioideae</taxon>
        <taxon>Anserineae</taxon>
        <taxon>Spinacia</taxon>
    </lineage>
</organism>
<gene>
    <name type="primary">PSAH</name>
</gene>
<accession>P22179</accession>
<dbReference type="EMBL" id="X16858">
    <property type="protein sequence ID" value="CAA34749.1"/>
    <property type="molecule type" value="mRNA"/>
</dbReference>
<dbReference type="PIR" id="S00453">
    <property type="entry name" value="S00453"/>
</dbReference>
<dbReference type="PDB" id="2O01">
    <property type="method" value="X-ray"/>
    <property type="resolution" value="3.40 A"/>
    <property type="chains" value="H=70-144"/>
</dbReference>
<dbReference type="PDB" id="2WSC">
    <property type="method" value="X-ray"/>
    <property type="resolution" value="3.30 A"/>
    <property type="chains" value="H=1-144"/>
</dbReference>
<dbReference type="PDB" id="2WSE">
    <property type="method" value="X-ray"/>
    <property type="resolution" value="3.49 A"/>
    <property type="chains" value="H=1-144"/>
</dbReference>
<dbReference type="PDB" id="2WSF">
    <property type="method" value="X-ray"/>
    <property type="resolution" value="3.48 A"/>
    <property type="chains" value="H=1-144"/>
</dbReference>
<dbReference type="PDB" id="9GRX">
    <property type="method" value="EM"/>
    <property type="resolution" value="3.19 A"/>
    <property type="chains" value="h=50-144"/>
</dbReference>
<dbReference type="PDBsum" id="2O01"/>
<dbReference type="PDBsum" id="2WSC"/>
<dbReference type="PDBsum" id="2WSE"/>
<dbReference type="PDBsum" id="2WSF"/>
<dbReference type="PDBsum" id="9GRX"/>
<dbReference type="EMDB" id="EMD-51527"/>
<dbReference type="SMR" id="P22179"/>
<dbReference type="OrthoDB" id="496139at2759"/>
<dbReference type="EvolutionaryTrace" id="P22179"/>
<dbReference type="Proteomes" id="UP001155700">
    <property type="component" value="Unplaced"/>
</dbReference>
<dbReference type="GO" id="GO:0009535">
    <property type="term" value="C:chloroplast thylakoid membrane"/>
    <property type="evidence" value="ECO:0007669"/>
    <property type="project" value="UniProtKB-SubCell"/>
</dbReference>
<dbReference type="GO" id="GO:0009538">
    <property type="term" value="C:photosystem I reaction center"/>
    <property type="evidence" value="ECO:0007669"/>
    <property type="project" value="InterPro"/>
</dbReference>
<dbReference type="GO" id="GO:0060090">
    <property type="term" value="F:molecular adaptor activity"/>
    <property type="evidence" value="ECO:0000269"/>
    <property type="project" value="DisProt"/>
</dbReference>
<dbReference type="GO" id="GO:0015979">
    <property type="term" value="P:photosynthesis"/>
    <property type="evidence" value="ECO:0007669"/>
    <property type="project" value="UniProtKB-KW"/>
</dbReference>
<dbReference type="DisProt" id="DP00803"/>
<dbReference type="FunFam" id="1.20.5.220:FF:000003">
    <property type="entry name" value="Photosystem I reaction center subunit VI"/>
    <property type="match status" value="1"/>
</dbReference>
<dbReference type="Gene3D" id="1.20.5.220">
    <property type="match status" value="1"/>
</dbReference>
<dbReference type="InterPro" id="IPR004928">
    <property type="entry name" value="PSI_PsaH"/>
</dbReference>
<dbReference type="PANTHER" id="PTHR34787">
    <property type="entry name" value="PHOTOSYSTEM I REACTION CENTER SUBUNIT VI-2, CHLOROPLASTIC"/>
    <property type="match status" value="1"/>
</dbReference>
<dbReference type="PANTHER" id="PTHR34787:SF1">
    <property type="entry name" value="PHOTOSYSTEM I REACTION CENTER SUBUNIT VI-2, CHLOROPLASTIC"/>
    <property type="match status" value="1"/>
</dbReference>
<dbReference type="Pfam" id="PF03244">
    <property type="entry name" value="PSI_PsaH"/>
    <property type="match status" value="1"/>
</dbReference>
<comment type="function">
    <text>Possible role could be the docking of the LHC I antenna complex to the core complex.</text>
</comment>
<comment type="subcellular location">
    <subcellularLocation>
        <location evidence="1">Plastid</location>
        <location evidence="1">Chloroplast thylakoid membrane</location>
        <topology evidence="1">Single-pass membrane protein</topology>
    </subcellularLocation>
</comment>
<comment type="similarity">
    <text evidence="3">Belongs to the psaH family.</text>
</comment>
<protein>
    <recommendedName>
        <fullName>Photosystem I reaction center subunit VI, chloroplastic</fullName>
        <shortName>PSI-H</shortName>
    </recommendedName>
    <alternativeName>
        <fullName>Light-harvesting complex I 11 kDa protein</fullName>
    </alternativeName>
</protein>
<sequence length="144" mass="15325">MASLATLAAVQPTTLKGLAGSSIAGTKLHIKPARQSFKLNNVRSGAIVAKYGDKSVYFDLEDIANTTGQWDVYGSDAPSPYNSLQSKFFETFAAPFTKRGLLLKFLILGGGSLLTYVSANAPQDVLPITRGPQQPPKLGPRGKI</sequence>
<feature type="transit peptide" description="Chloroplast">
    <location>
        <begin position="1"/>
        <end position="49"/>
    </location>
</feature>
<feature type="chain" id="PRO_0000029419" description="Photosystem I reaction center subunit VI, chloroplastic">
    <location>
        <begin position="50"/>
        <end position="144"/>
    </location>
</feature>
<feature type="transmembrane region" description="Helical" evidence="2">
    <location>
        <begin position="104"/>
        <end position="122"/>
    </location>
</feature>
<feature type="strand" evidence="4">
    <location>
        <begin position="75"/>
        <end position="77"/>
    </location>
</feature>
<feature type="strand" evidence="5">
    <location>
        <begin position="87"/>
        <end position="93"/>
    </location>
</feature>
<feature type="strand" evidence="4">
    <location>
        <begin position="99"/>
        <end position="101"/>
    </location>
</feature>
<feature type="turn" evidence="5">
    <location>
        <begin position="104"/>
        <end position="109"/>
    </location>
</feature>
<feature type="helix" evidence="5">
    <location>
        <begin position="110"/>
        <end position="112"/>
    </location>
</feature>
<feature type="turn" evidence="5">
    <location>
        <begin position="113"/>
        <end position="118"/>
    </location>
</feature>
<feature type="strand" evidence="4">
    <location>
        <begin position="138"/>
        <end position="141"/>
    </location>
</feature>